<evidence type="ECO:0000250" key="1"/>
<evidence type="ECO:0000255" key="2"/>
<evidence type="ECO:0000256" key="3">
    <source>
        <dbReference type="SAM" id="MobiDB-lite"/>
    </source>
</evidence>
<evidence type="ECO:0000305" key="4"/>
<gene>
    <name type="primary">CNOT10</name>
    <name type="ORF">RCJMB04_23c21</name>
</gene>
<sequence length="744" mass="82122">MAADKAADQGAEKHDGAGTSGITDQEKELSSSALQAFLAGNYDACLQHLNTLQDINKDDYKITLNTAVAEFCKSNQTTTDNLRQTLNQLKNQVHSAVEEMDGLDDVENSMLYYNQAVILYHLRQYTEAISVGEKLYQFIEPFEEKFAQAVCFLLVDLYLLTYQAEKALHLLAVLEKMISQGNNNSKNGKNESGNNTNKDSSNQKAESGALIEVAKSKIHQYKVRAYIQMKSLKACKREIKSVMNTAGNSAPSLFLKSNFEYLRGNYRKAVKLLNSANIAEHPGFMKTGECLRCMFWNNLGCIHFAMGKHNLGIFYFKKALQENDNACAQLGTGSSDPGKKFSGRPMCTLLTNKRYELLYNCGIQLLHIGRPLAAFECLIEAVQVYHSNPRLWLRIAECCIAANKGTSEQETKGLPSKKGIVQSIVGQGYHRKIVLASQSIQNVVYNDGQSSAIPVASMEFAAICLRNALLLLPEDQQEPKQENGSKPNNQLGGNTENSESSEACSNKSHEGDKFIAAPPSSPLKKQELENLRCSILACSAYVALALGDNLMALNHADKLLQQPKLSGSLKFLGHLYAAEALISLDRISDAITHLNPENVTDVSLGISSNEQDQGSDKGENEAMESSGKQTPQCYPSSVTSARTMMLFNLGSAYCLRSEYDKARKCLHQAASLIHPKEIPPEAILLAVYLELQNGNTQLALQIIKRNQLLPSVKTLSDMRKKPVFQPVHSLQPIQMPTFTAVQRK</sequence>
<organism>
    <name type="scientific">Gallus gallus</name>
    <name type="common">Chicken</name>
    <dbReference type="NCBI Taxonomy" id="9031"/>
    <lineage>
        <taxon>Eukaryota</taxon>
        <taxon>Metazoa</taxon>
        <taxon>Chordata</taxon>
        <taxon>Craniata</taxon>
        <taxon>Vertebrata</taxon>
        <taxon>Euteleostomi</taxon>
        <taxon>Archelosauria</taxon>
        <taxon>Archosauria</taxon>
        <taxon>Dinosauria</taxon>
        <taxon>Saurischia</taxon>
        <taxon>Theropoda</taxon>
        <taxon>Coelurosauria</taxon>
        <taxon>Aves</taxon>
        <taxon>Neognathae</taxon>
        <taxon>Galloanserae</taxon>
        <taxon>Galliformes</taxon>
        <taxon>Phasianidae</taxon>
        <taxon>Phasianinae</taxon>
        <taxon>Gallus</taxon>
    </lineage>
</organism>
<comment type="function">
    <text evidence="1">Component of the CCR4-NOT complex which is one of the major cellular mRNA deadenylases and is linked to various cellular processes including bulk mRNA degradation, miRNA-mediated repression, translational repression during translational initiation and general transcription regulation. Additional complex functions may be a consequence of its influence on mRNA expression. Is not required for association of CNOT7 to the CCR4-NOT complex (By similarity).</text>
</comment>
<comment type="subunit">
    <text evidence="1">Component of the CCR4-NOT complex. CNOT10 and CNOT11 form a subcomplex docked to the CNOT1 scaffold (By similarity).</text>
</comment>
<comment type="subcellular location">
    <subcellularLocation>
        <location evidence="1">Cytoplasm</location>
    </subcellularLocation>
    <subcellularLocation>
        <location evidence="1">Nucleus</location>
    </subcellularLocation>
</comment>
<comment type="similarity">
    <text evidence="4">Belongs to the CNOT10 family.</text>
</comment>
<feature type="chain" id="PRO_0000314583" description="CCR4-NOT transcription complex subunit 10">
    <location>
        <begin position="1"/>
        <end position="744"/>
    </location>
</feature>
<feature type="region of interest" description="Disordered" evidence="3">
    <location>
        <begin position="1"/>
        <end position="25"/>
    </location>
</feature>
<feature type="region of interest" description="Disordered" evidence="3">
    <location>
        <begin position="182"/>
        <end position="204"/>
    </location>
</feature>
<feature type="region of interest" description="Disordered" evidence="3">
    <location>
        <begin position="476"/>
        <end position="520"/>
    </location>
</feature>
<feature type="region of interest" description="Disordered" evidence="3">
    <location>
        <begin position="602"/>
        <end position="634"/>
    </location>
</feature>
<feature type="coiled-coil region" evidence="2">
    <location>
        <begin position="72"/>
        <end position="106"/>
    </location>
</feature>
<feature type="compositionally biased region" description="Basic and acidic residues" evidence="3">
    <location>
        <begin position="1"/>
        <end position="16"/>
    </location>
</feature>
<feature type="compositionally biased region" description="Low complexity" evidence="3">
    <location>
        <begin position="182"/>
        <end position="198"/>
    </location>
</feature>
<feature type="compositionally biased region" description="Polar residues" evidence="3">
    <location>
        <begin position="484"/>
        <end position="506"/>
    </location>
</feature>
<feature type="compositionally biased region" description="Polar residues" evidence="3">
    <location>
        <begin position="602"/>
        <end position="612"/>
    </location>
</feature>
<reference key="1">
    <citation type="journal article" date="2005" name="Genome Biol.">
        <title>Full-length cDNAs from chicken bursal lymphocytes to facilitate gene function analysis.</title>
        <authorList>
            <person name="Caldwell R.B."/>
            <person name="Kierzek A.M."/>
            <person name="Arakawa H."/>
            <person name="Bezzubov Y."/>
            <person name="Zaim J."/>
            <person name="Fiedler P."/>
            <person name="Kutter S."/>
            <person name="Blagodatski A."/>
            <person name="Kostovska D."/>
            <person name="Koter M."/>
            <person name="Plachy J."/>
            <person name="Carninci P."/>
            <person name="Hayashizaki Y."/>
            <person name="Buerstedde J.-M."/>
        </authorList>
    </citation>
    <scope>NUCLEOTIDE SEQUENCE [LARGE SCALE MRNA]</scope>
    <source>
        <strain>CB</strain>
        <tissue>Bursa of Fabricius</tissue>
    </source>
</reference>
<name>CNO10_CHICK</name>
<dbReference type="EMBL" id="AJ720672">
    <property type="protein sequence ID" value="CAG32331.1"/>
    <property type="molecule type" value="mRNA"/>
</dbReference>
<dbReference type="RefSeq" id="NP_001006364.1">
    <property type="nucleotide sequence ID" value="NM_001006364.3"/>
</dbReference>
<dbReference type="PDB" id="8FY4">
    <property type="method" value="EM"/>
    <property type="resolution" value="2.57 A"/>
    <property type="chains" value="B=24-707"/>
</dbReference>
<dbReference type="PDBsum" id="8FY4"/>
<dbReference type="EMDB" id="EMD-29552"/>
<dbReference type="SMR" id="Q5ZIW2"/>
<dbReference type="FunCoup" id="Q5ZIW2">
    <property type="interactions" value="2916"/>
</dbReference>
<dbReference type="STRING" id="9031.ENSGALP00000018708"/>
<dbReference type="PaxDb" id="9031-ENSGALP00000018708"/>
<dbReference type="Ensembl" id="ENSGALT00010042554.1">
    <property type="protein sequence ID" value="ENSGALP00010025044.1"/>
    <property type="gene ID" value="ENSGALG00010017597.1"/>
</dbReference>
<dbReference type="GeneID" id="420669"/>
<dbReference type="KEGG" id="gga:420669"/>
<dbReference type="CTD" id="25904"/>
<dbReference type="VEuPathDB" id="HostDB:geneid_420669"/>
<dbReference type="eggNOG" id="KOG2471">
    <property type="taxonomic scope" value="Eukaryota"/>
</dbReference>
<dbReference type="GeneTree" id="ENSGT00390000001827"/>
<dbReference type="HOGENOM" id="CLU_013100_0_0_1"/>
<dbReference type="InParanoid" id="Q5ZIW2"/>
<dbReference type="OMA" id="PECSRMY"/>
<dbReference type="OrthoDB" id="25157at2759"/>
<dbReference type="PhylomeDB" id="Q5ZIW2"/>
<dbReference type="TreeFam" id="TF323368"/>
<dbReference type="Reactome" id="R-GGA-429947">
    <property type="pathway name" value="Deadenylation of mRNA"/>
</dbReference>
<dbReference type="Reactome" id="R-GGA-6804115">
    <property type="pathway name" value="TP53 regulates transcription of additional cell cycle genes whose exact role in the p53 pathway remain uncertain"/>
</dbReference>
<dbReference type="PRO" id="PR:Q5ZIW2"/>
<dbReference type="Proteomes" id="UP000000539">
    <property type="component" value="Chromosome 2"/>
</dbReference>
<dbReference type="Bgee" id="ENSGALG00000011494">
    <property type="expression patterns" value="Expressed in testis and 12 other cell types or tissues"/>
</dbReference>
<dbReference type="GO" id="GO:0030014">
    <property type="term" value="C:CCR4-NOT complex"/>
    <property type="evidence" value="ECO:0000250"/>
    <property type="project" value="UniProtKB"/>
</dbReference>
<dbReference type="GO" id="GO:0005737">
    <property type="term" value="C:cytoplasm"/>
    <property type="evidence" value="ECO:0007669"/>
    <property type="project" value="UniProtKB-SubCell"/>
</dbReference>
<dbReference type="GO" id="GO:0005634">
    <property type="term" value="C:nucleus"/>
    <property type="evidence" value="ECO:0007669"/>
    <property type="project" value="UniProtKB-SubCell"/>
</dbReference>
<dbReference type="GO" id="GO:0006402">
    <property type="term" value="P:mRNA catabolic process"/>
    <property type="evidence" value="ECO:0000318"/>
    <property type="project" value="GO_Central"/>
</dbReference>
<dbReference type="GO" id="GO:0017148">
    <property type="term" value="P:negative regulation of translation"/>
    <property type="evidence" value="ECO:0000318"/>
    <property type="project" value="GO_Central"/>
</dbReference>
<dbReference type="GO" id="GO:0031047">
    <property type="term" value="P:regulatory ncRNA-mediated gene silencing"/>
    <property type="evidence" value="ECO:0007669"/>
    <property type="project" value="UniProtKB-KW"/>
</dbReference>
<dbReference type="FunFam" id="1.25.40.10:FF:000092">
    <property type="entry name" value="CCR4-NOT transcription complex subunit 10 isoform X1"/>
    <property type="match status" value="1"/>
</dbReference>
<dbReference type="Gene3D" id="1.25.40.10">
    <property type="entry name" value="Tetratricopeptide repeat domain"/>
    <property type="match status" value="2"/>
</dbReference>
<dbReference type="InterPro" id="IPR039740">
    <property type="entry name" value="CNOT10"/>
</dbReference>
<dbReference type="InterPro" id="IPR011990">
    <property type="entry name" value="TPR-like_helical_dom_sf"/>
</dbReference>
<dbReference type="InterPro" id="IPR019734">
    <property type="entry name" value="TPR_rpt"/>
</dbReference>
<dbReference type="PANTHER" id="PTHR12979">
    <property type="entry name" value="CCR4-NOT TRANSCRIPTION COMPLEX SUBUNIT 10"/>
    <property type="match status" value="1"/>
</dbReference>
<dbReference type="PANTHER" id="PTHR12979:SF5">
    <property type="entry name" value="CCR4-NOT TRANSCRIPTION COMPLEX SUBUNIT 10"/>
    <property type="match status" value="1"/>
</dbReference>
<dbReference type="Pfam" id="PF13181">
    <property type="entry name" value="TPR_8"/>
    <property type="match status" value="1"/>
</dbReference>
<dbReference type="SMART" id="SM00028">
    <property type="entry name" value="TPR"/>
    <property type="match status" value="5"/>
</dbReference>
<dbReference type="SUPFAM" id="SSF48452">
    <property type="entry name" value="TPR-like"/>
    <property type="match status" value="2"/>
</dbReference>
<protein>
    <recommendedName>
        <fullName>CCR4-NOT transcription complex subunit 10</fullName>
    </recommendedName>
</protein>
<keyword id="KW-0002">3D-structure</keyword>
<keyword id="KW-0175">Coiled coil</keyword>
<keyword id="KW-0963">Cytoplasm</keyword>
<keyword id="KW-0539">Nucleus</keyword>
<keyword id="KW-1185">Reference proteome</keyword>
<keyword id="KW-0943">RNA-mediated gene silencing</keyword>
<keyword id="KW-0804">Transcription</keyword>
<keyword id="KW-0805">Transcription regulation</keyword>
<keyword id="KW-0810">Translation regulation</keyword>
<proteinExistence type="evidence at protein level"/>
<accession>Q5ZIW2</accession>